<organism>
    <name type="scientific">Desulforamulus reducens (strain ATCC BAA-1160 / DSM 100696 / MI-1)</name>
    <name type="common">Desulfotomaculum reducens</name>
    <dbReference type="NCBI Taxonomy" id="349161"/>
    <lineage>
        <taxon>Bacteria</taxon>
        <taxon>Bacillati</taxon>
        <taxon>Bacillota</taxon>
        <taxon>Clostridia</taxon>
        <taxon>Eubacteriales</taxon>
        <taxon>Peptococcaceae</taxon>
        <taxon>Desulforamulus</taxon>
    </lineage>
</organism>
<proteinExistence type="inferred from homology"/>
<dbReference type="EC" id="4.3.3.7" evidence="1"/>
<dbReference type="EMBL" id="CP000612">
    <property type="protein sequence ID" value="ABO50458.1"/>
    <property type="molecule type" value="Genomic_DNA"/>
</dbReference>
<dbReference type="RefSeq" id="WP_011878268.1">
    <property type="nucleotide sequence ID" value="NC_009253.1"/>
</dbReference>
<dbReference type="SMR" id="A4J5V5"/>
<dbReference type="STRING" id="349161.Dred_1939"/>
<dbReference type="KEGG" id="drm:Dred_1939"/>
<dbReference type="eggNOG" id="COG0329">
    <property type="taxonomic scope" value="Bacteria"/>
</dbReference>
<dbReference type="HOGENOM" id="CLU_049343_7_1_9"/>
<dbReference type="OrthoDB" id="9782828at2"/>
<dbReference type="UniPathway" id="UPA00034">
    <property type="reaction ID" value="UER00017"/>
</dbReference>
<dbReference type="Proteomes" id="UP000001556">
    <property type="component" value="Chromosome"/>
</dbReference>
<dbReference type="GO" id="GO:0005829">
    <property type="term" value="C:cytosol"/>
    <property type="evidence" value="ECO:0007669"/>
    <property type="project" value="TreeGrafter"/>
</dbReference>
<dbReference type="GO" id="GO:0008840">
    <property type="term" value="F:4-hydroxy-tetrahydrodipicolinate synthase activity"/>
    <property type="evidence" value="ECO:0007669"/>
    <property type="project" value="UniProtKB-UniRule"/>
</dbReference>
<dbReference type="GO" id="GO:0019877">
    <property type="term" value="P:diaminopimelate biosynthetic process"/>
    <property type="evidence" value="ECO:0007669"/>
    <property type="project" value="UniProtKB-UniRule"/>
</dbReference>
<dbReference type="GO" id="GO:0009089">
    <property type="term" value="P:lysine biosynthetic process via diaminopimelate"/>
    <property type="evidence" value="ECO:0007669"/>
    <property type="project" value="UniProtKB-UniRule"/>
</dbReference>
<dbReference type="CDD" id="cd00950">
    <property type="entry name" value="DHDPS"/>
    <property type="match status" value="1"/>
</dbReference>
<dbReference type="Gene3D" id="3.20.20.70">
    <property type="entry name" value="Aldolase class I"/>
    <property type="match status" value="1"/>
</dbReference>
<dbReference type="HAMAP" id="MF_00418">
    <property type="entry name" value="DapA"/>
    <property type="match status" value="1"/>
</dbReference>
<dbReference type="InterPro" id="IPR013785">
    <property type="entry name" value="Aldolase_TIM"/>
</dbReference>
<dbReference type="InterPro" id="IPR005263">
    <property type="entry name" value="DapA"/>
</dbReference>
<dbReference type="InterPro" id="IPR002220">
    <property type="entry name" value="DapA-like"/>
</dbReference>
<dbReference type="InterPro" id="IPR020625">
    <property type="entry name" value="Schiff_base-form_aldolases_AS"/>
</dbReference>
<dbReference type="InterPro" id="IPR020624">
    <property type="entry name" value="Schiff_base-form_aldolases_CS"/>
</dbReference>
<dbReference type="NCBIfam" id="TIGR00674">
    <property type="entry name" value="dapA"/>
    <property type="match status" value="1"/>
</dbReference>
<dbReference type="PANTHER" id="PTHR12128:SF66">
    <property type="entry name" value="4-HYDROXY-2-OXOGLUTARATE ALDOLASE, MITOCHONDRIAL"/>
    <property type="match status" value="1"/>
</dbReference>
<dbReference type="PANTHER" id="PTHR12128">
    <property type="entry name" value="DIHYDRODIPICOLINATE SYNTHASE"/>
    <property type="match status" value="1"/>
</dbReference>
<dbReference type="Pfam" id="PF00701">
    <property type="entry name" value="DHDPS"/>
    <property type="match status" value="1"/>
</dbReference>
<dbReference type="PIRSF" id="PIRSF001365">
    <property type="entry name" value="DHDPS"/>
    <property type="match status" value="1"/>
</dbReference>
<dbReference type="PRINTS" id="PR00146">
    <property type="entry name" value="DHPICSNTHASE"/>
</dbReference>
<dbReference type="SMART" id="SM01130">
    <property type="entry name" value="DHDPS"/>
    <property type="match status" value="1"/>
</dbReference>
<dbReference type="SUPFAM" id="SSF51569">
    <property type="entry name" value="Aldolase"/>
    <property type="match status" value="1"/>
</dbReference>
<dbReference type="PROSITE" id="PS00665">
    <property type="entry name" value="DHDPS_1"/>
    <property type="match status" value="1"/>
</dbReference>
<dbReference type="PROSITE" id="PS00666">
    <property type="entry name" value="DHDPS_2"/>
    <property type="match status" value="1"/>
</dbReference>
<reference key="1">
    <citation type="submission" date="2007-03" db="EMBL/GenBank/DDBJ databases">
        <title>Complete sequence of Desulfotomaculum reducens MI-1.</title>
        <authorList>
            <consortium name="US DOE Joint Genome Institute"/>
            <person name="Copeland A."/>
            <person name="Lucas S."/>
            <person name="Lapidus A."/>
            <person name="Barry K."/>
            <person name="Detter J.C."/>
            <person name="Glavina del Rio T."/>
            <person name="Hammon N."/>
            <person name="Israni S."/>
            <person name="Dalin E."/>
            <person name="Tice H."/>
            <person name="Pitluck S."/>
            <person name="Sims D."/>
            <person name="Brettin T."/>
            <person name="Bruce D."/>
            <person name="Han C."/>
            <person name="Tapia R."/>
            <person name="Schmutz J."/>
            <person name="Larimer F."/>
            <person name="Land M."/>
            <person name="Hauser L."/>
            <person name="Kyrpides N."/>
            <person name="Kim E."/>
            <person name="Tebo B.M."/>
            <person name="Richardson P."/>
        </authorList>
    </citation>
    <scope>NUCLEOTIDE SEQUENCE [LARGE SCALE GENOMIC DNA]</scope>
    <source>
        <strain>ATCC BAA-1160 / DSM 100696 / MI-1</strain>
    </source>
</reference>
<accession>A4J5V5</accession>
<evidence type="ECO:0000255" key="1">
    <source>
        <dbReference type="HAMAP-Rule" id="MF_00418"/>
    </source>
</evidence>
<evidence type="ECO:0000305" key="2"/>
<sequence length="296" mass="31730">MSTVDFGRVITAMVTPFHPDMSVNYTQAKKLSRYLVENGSDGLVVSGTTGESPTLNKDEKIQLFKAVVEEVGGQATVIAGTGSYDTASSIILTKEAEKVGCDGVMLVAPYYNKPSQEGLYQHFRTIAECTSLPVMLYNIPGRTGINVLPATVERLAKDVPNIVAIKEAAGDINQVSELRRILPEDFIIFSGDDSLTLPMLSLGCKGIVSVAAHIAGKQIQEMIDAFTSGNTTLAANLHKELFPIFKGLFITSNPVPVKAALNLKGLAVGGVRLPLVEATAKEIETVKNIMNNLHLL</sequence>
<comment type="function">
    <text evidence="1">Catalyzes the condensation of (S)-aspartate-beta-semialdehyde [(S)-ASA] and pyruvate to 4-hydroxy-tetrahydrodipicolinate (HTPA).</text>
</comment>
<comment type="catalytic activity">
    <reaction evidence="1">
        <text>L-aspartate 4-semialdehyde + pyruvate = (2S,4S)-4-hydroxy-2,3,4,5-tetrahydrodipicolinate + H2O + H(+)</text>
        <dbReference type="Rhea" id="RHEA:34171"/>
        <dbReference type="ChEBI" id="CHEBI:15361"/>
        <dbReference type="ChEBI" id="CHEBI:15377"/>
        <dbReference type="ChEBI" id="CHEBI:15378"/>
        <dbReference type="ChEBI" id="CHEBI:67139"/>
        <dbReference type="ChEBI" id="CHEBI:537519"/>
        <dbReference type="EC" id="4.3.3.7"/>
    </reaction>
</comment>
<comment type="pathway">
    <text evidence="1">Amino-acid biosynthesis; L-lysine biosynthesis via DAP pathway; (S)-tetrahydrodipicolinate from L-aspartate: step 3/4.</text>
</comment>
<comment type="subunit">
    <text evidence="1">Homotetramer; dimer of dimers.</text>
</comment>
<comment type="subcellular location">
    <subcellularLocation>
        <location evidence="1">Cytoplasm</location>
    </subcellularLocation>
</comment>
<comment type="similarity">
    <text evidence="1">Belongs to the DapA family.</text>
</comment>
<comment type="caution">
    <text evidence="2">Was originally thought to be a dihydrodipicolinate synthase (DHDPS), catalyzing the condensation of (S)-aspartate-beta-semialdehyde [(S)-ASA] and pyruvate to dihydrodipicolinate (DHDP). However, it was shown in E.coli that the product of the enzymatic reaction is not dihydrodipicolinate but in fact (4S)-4-hydroxy-2,3,4,5-tetrahydro-(2S)-dipicolinic acid (HTPA), and that the consecutive dehydration reaction leading to DHDP is not spontaneous but catalyzed by DapB.</text>
</comment>
<keyword id="KW-0028">Amino-acid biosynthesis</keyword>
<keyword id="KW-0963">Cytoplasm</keyword>
<keyword id="KW-0220">Diaminopimelate biosynthesis</keyword>
<keyword id="KW-0456">Lyase</keyword>
<keyword id="KW-0457">Lysine biosynthesis</keyword>
<keyword id="KW-1185">Reference proteome</keyword>
<keyword id="KW-0704">Schiff base</keyword>
<feature type="chain" id="PRO_0000340945" description="4-hydroxy-tetrahydrodipicolinate synthase">
    <location>
        <begin position="1"/>
        <end position="296"/>
    </location>
</feature>
<feature type="active site" description="Proton donor/acceptor" evidence="1">
    <location>
        <position position="137"/>
    </location>
</feature>
<feature type="active site" description="Schiff-base intermediate with substrate" evidence="1">
    <location>
        <position position="166"/>
    </location>
</feature>
<feature type="binding site" evidence="1">
    <location>
        <position position="49"/>
    </location>
    <ligand>
        <name>pyruvate</name>
        <dbReference type="ChEBI" id="CHEBI:15361"/>
    </ligand>
</feature>
<feature type="binding site" evidence="1">
    <location>
        <position position="208"/>
    </location>
    <ligand>
        <name>pyruvate</name>
        <dbReference type="ChEBI" id="CHEBI:15361"/>
    </ligand>
</feature>
<feature type="site" description="Part of a proton relay during catalysis" evidence="1">
    <location>
        <position position="48"/>
    </location>
</feature>
<feature type="site" description="Part of a proton relay during catalysis" evidence="1">
    <location>
        <position position="111"/>
    </location>
</feature>
<name>DAPA_DESRM</name>
<gene>
    <name evidence="1" type="primary">dapA</name>
    <name type="ordered locus">Dred_1939</name>
</gene>
<protein>
    <recommendedName>
        <fullName evidence="1">4-hydroxy-tetrahydrodipicolinate synthase</fullName>
        <shortName evidence="1">HTPA synthase</shortName>
        <ecNumber evidence="1">4.3.3.7</ecNumber>
    </recommendedName>
</protein>